<accession>Q92R68</accession>
<reference key="1">
    <citation type="journal article" date="2001" name="Proc. Natl. Acad. Sci. U.S.A.">
        <title>Analysis of the chromosome sequence of the legume symbiont Sinorhizobium meliloti strain 1021.</title>
        <authorList>
            <person name="Capela D."/>
            <person name="Barloy-Hubler F."/>
            <person name="Gouzy J."/>
            <person name="Bothe G."/>
            <person name="Ampe F."/>
            <person name="Batut J."/>
            <person name="Boistard P."/>
            <person name="Becker A."/>
            <person name="Boutry M."/>
            <person name="Cadieu E."/>
            <person name="Dreano S."/>
            <person name="Gloux S."/>
            <person name="Godrie T."/>
            <person name="Goffeau A."/>
            <person name="Kahn D."/>
            <person name="Kiss E."/>
            <person name="Lelaure V."/>
            <person name="Masuy D."/>
            <person name="Pohl T."/>
            <person name="Portetelle D."/>
            <person name="Puehler A."/>
            <person name="Purnelle B."/>
            <person name="Ramsperger U."/>
            <person name="Renard C."/>
            <person name="Thebault P."/>
            <person name="Vandenbol M."/>
            <person name="Weidner S."/>
            <person name="Galibert F."/>
        </authorList>
    </citation>
    <scope>NUCLEOTIDE SEQUENCE [LARGE SCALE GENOMIC DNA]</scope>
    <source>
        <strain>1021</strain>
    </source>
</reference>
<reference key="2">
    <citation type="journal article" date="2001" name="Science">
        <title>The composite genome of the legume symbiont Sinorhizobium meliloti.</title>
        <authorList>
            <person name="Galibert F."/>
            <person name="Finan T.M."/>
            <person name="Long S.R."/>
            <person name="Puehler A."/>
            <person name="Abola P."/>
            <person name="Ampe F."/>
            <person name="Barloy-Hubler F."/>
            <person name="Barnett M.J."/>
            <person name="Becker A."/>
            <person name="Boistard P."/>
            <person name="Bothe G."/>
            <person name="Boutry M."/>
            <person name="Bowser L."/>
            <person name="Buhrmester J."/>
            <person name="Cadieu E."/>
            <person name="Capela D."/>
            <person name="Chain P."/>
            <person name="Cowie A."/>
            <person name="Davis R.W."/>
            <person name="Dreano S."/>
            <person name="Federspiel N.A."/>
            <person name="Fisher R.F."/>
            <person name="Gloux S."/>
            <person name="Godrie T."/>
            <person name="Goffeau A."/>
            <person name="Golding B."/>
            <person name="Gouzy J."/>
            <person name="Gurjal M."/>
            <person name="Hernandez-Lucas I."/>
            <person name="Hong A."/>
            <person name="Huizar L."/>
            <person name="Hyman R.W."/>
            <person name="Jones T."/>
            <person name="Kahn D."/>
            <person name="Kahn M.L."/>
            <person name="Kalman S."/>
            <person name="Keating D.H."/>
            <person name="Kiss E."/>
            <person name="Komp C."/>
            <person name="Lelaure V."/>
            <person name="Masuy D."/>
            <person name="Palm C."/>
            <person name="Peck M.C."/>
            <person name="Pohl T.M."/>
            <person name="Portetelle D."/>
            <person name="Purnelle B."/>
            <person name="Ramsperger U."/>
            <person name="Surzycki R."/>
            <person name="Thebault P."/>
            <person name="Vandenbol M."/>
            <person name="Vorhoelter F.J."/>
            <person name="Weidner S."/>
            <person name="Wells D.H."/>
            <person name="Wong K."/>
            <person name="Yeh K.-C."/>
            <person name="Batut J."/>
        </authorList>
    </citation>
    <scope>NUCLEOTIDE SEQUENCE [LARGE SCALE GENOMIC DNA]</scope>
    <source>
        <strain>1021</strain>
    </source>
</reference>
<evidence type="ECO:0000255" key="1">
    <source>
        <dbReference type="HAMAP-Rule" id="MF_00010"/>
    </source>
</evidence>
<keyword id="KW-0997">Cell inner membrane</keyword>
<keyword id="KW-1003">Cell membrane</keyword>
<keyword id="KW-0472">Membrane</keyword>
<keyword id="KW-1185">Reference proteome</keyword>
<keyword id="KW-0812">Transmembrane</keyword>
<keyword id="KW-1133">Transmembrane helix</keyword>
<name>Y1043_RHIME</name>
<organism>
    <name type="scientific">Rhizobium meliloti (strain 1021)</name>
    <name type="common">Ensifer meliloti</name>
    <name type="synonym">Sinorhizobium meliloti</name>
    <dbReference type="NCBI Taxonomy" id="266834"/>
    <lineage>
        <taxon>Bacteria</taxon>
        <taxon>Pseudomonadati</taxon>
        <taxon>Pseudomonadota</taxon>
        <taxon>Alphaproteobacteria</taxon>
        <taxon>Hyphomicrobiales</taxon>
        <taxon>Rhizobiaceae</taxon>
        <taxon>Sinorhizobium/Ensifer group</taxon>
        <taxon>Sinorhizobium</taxon>
    </lineage>
</organism>
<comment type="subcellular location">
    <subcellularLocation>
        <location evidence="1">Cell inner membrane</location>
        <topology evidence="1">Multi-pass membrane protein</topology>
    </subcellularLocation>
</comment>
<comment type="similarity">
    <text evidence="1">Belongs to the UPF0060 family.</text>
</comment>
<proteinExistence type="inferred from homology"/>
<dbReference type="EMBL" id="AL591688">
    <property type="protein sequence ID" value="CAC45615.1"/>
    <property type="molecule type" value="Genomic_DNA"/>
</dbReference>
<dbReference type="RefSeq" id="NP_385149.1">
    <property type="nucleotide sequence ID" value="NC_003047.1"/>
</dbReference>
<dbReference type="RefSeq" id="WP_003527320.1">
    <property type="nucleotide sequence ID" value="NC_003047.1"/>
</dbReference>
<dbReference type="EnsemblBacteria" id="CAC45615">
    <property type="protein sequence ID" value="CAC45615"/>
    <property type="gene ID" value="SMc02387"/>
</dbReference>
<dbReference type="KEGG" id="sme:SMc02387"/>
<dbReference type="PATRIC" id="fig|266834.11.peg.2448"/>
<dbReference type="eggNOG" id="COG1742">
    <property type="taxonomic scope" value="Bacteria"/>
</dbReference>
<dbReference type="HOGENOM" id="CLU_117653_1_0_5"/>
<dbReference type="OrthoDB" id="123240at2"/>
<dbReference type="Proteomes" id="UP000001976">
    <property type="component" value="Chromosome"/>
</dbReference>
<dbReference type="GO" id="GO:0005886">
    <property type="term" value="C:plasma membrane"/>
    <property type="evidence" value="ECO:0007669"/>
    <property type="project" value="UniProtKB-SubCell"/>
</dbReference>
<dbReference type="HAMAP" id="MF_00010">
    <property type="entry name" value="UPF0060"/>
    <property type="match status" value="1"/>
</dbReference>
<dbReference type="InterPro" id="IPR003844">
    <property type="entry name" value="UPF0060"/>
</dbReference>
<dbReference type="NCBIfam" id="NF002586">
    <property type="entry name" value="PRK02237.1"/>
    <property type="match status" value="1"/>
</dbReference>
<dbReference type="PANTHER" id="PTHR36116">
    <property type="entry name" value="UPF0060 MEMBRANE PROTEIN YNFA"/>
    <property type="match status" value="1"/>
</dbReference>
<dbReference type="PANTHER" id="PTHR36116:SF1">
    <property type="entry name" value="UPF0060 MEMBRANE PROTEIN YNFA"/>
    <property type="match status" value="1"/>
</dbReference>
<dbReference type="Pfam" id="PF02694">
    <property type="entry name" value="UPF0060"/>
    <property type="match status" value="1"/>
</dbReference>
<dbReference type="SUPFAM" id="SSF103481">
    <property type="entry name" value="Multidrug resistance efflux transporter EmrE"/>
    <property type="match status" value="1"/>
</dbReference>
<feature type="chain" id="PRO_0000162341" description="UPF0060 membrane protein R01043">
    <location>
        <begin position="1"/>
        <end position="106"/>
    </location>
</feature>
<feature type="transmembrane region" description="Helical" evidence="1">
    <location>
        <begin position="5"/>
        <end position="25"/>
    </location>
</feature>
<feature type="transmembrane region" description="Helical" evidence="1">
    <location>
        <begin position="31"/>
        <end position="51"/>
    </location>
</feature>
<feature type="transmembrane region" description="Helical" evidence="1">
    <location>
        <begin position="61"/>
        <end position="81"/>
    </location>
</feature>
<feature type="transmembrane region" description="Helical" evidence="1">
    <location>
        <begin position="85"/>
        <end position="105"/>
    </location>
</feature>
<sequence length="106" mass="11311">MPAYAIYFLAALAEITGCFAFWSWLRLGKSALWLIPGMASLALFAWLLTMVDAAAAGRTYAAYGGVYIVASLSWLWLAEGVRPDHWDMTGAAVALAGSAIILAGPR</sequence>
<gene>
    <name type="ordered locus">R01043</name>
    <name type="ORF">SMc02387</name>
</gene>
<protein>
    <recommendedName>
        <fullName evidence="1">UPF0060 membrane protein R01043</fullName>
    </recommendedName>
</protein>